<organism>
    <name type="scientific">Bos taurus</name>
    <name type="common">Bovine</name>
    <dbReference type="NCBI Taxonomy" id="9913"/>
    <lineage>
        <taxon>Eukaryota</taxon>
        <taxon>Metazoa</taxon>
        <taxon>Chordata</taxon>
        <taxon>Craniata</taxon>
        <taxon>Vertebrata</taxon>
        <taxon>Euteleostomi</taxon>
        <taxon>Mammalia</taxon>
        <taxon>Eutheria</taxon>
        <taxon>Laurasiatheria</taxon>
        <taxon>Artiodactyla</taxon>
        <taxon>Ruminantia</taxon>
        <taxon>Pecora</taxon>
        <taxon>Bovidae</taxon>
        <taxon>Bovinae</taxon>
        <taxon>Bos</taxon>
    </lineage>
</organism>
<reference key="1">
    <citation type="submission" date="2005-12" db="EMBL/GenBank/DDBJ databases">
        <authorList>
            <consortium name="NIH - Mammalian Gene Collection (MGC) project"/>
        </authorList>
    </citation>
    <scope>NUCLEOTIDE SEQUENCE [LARGE SCALE MRNA]</scope>
    <source>
        <strain>Crossbred X Angus</strain>
        <tissue>Liver</tissue>
    </source>
</reference>
<keyword id="KW-1185">Reference proteome</keyword>
<name>CH074_BOVIN</name>
<protein>
    <recommendedName>
        <fullName>Uncharacterized protein C8orf74 homolog</fullName>
    </recommendedName>
</protein>
<sequence length="293" mass="33972">MALLTAQGVKKVFQFQKPEGREHLRRLLNWEEFDELRDSRRSILLDTLYESIIFAVGKGFPWREVAQVVKFTEELLKETKGCSITEAVTILGNKLRDYQGQFNTTHLLALCDYFHNTFIRHYKLYQYVLGQDQDVNLTVTNLEVCTPPQPLPLAEGKDREVWKHEQQLEELSTAEVQKRTNMLLLKGALRLEQQHLLQETFSQLPGRRHQTLNREELEKLITEAIHIQIECLKELLQYEIQITFDILDLKLQKKTLNLNAPIPPLVPIAGQPGQDEALKLSKTHKGKKAKAKK</sequence>
<proteinExistence type="evidence at transcript level"/>
<feature type="chain" id="PRO_0000270930" description="Uncharacterized protein C8orf74 homolog">
    <location>
        <begin position="1"/>
        <end position="293"/>
    </location>
</feature>
<accession>Q2NL11</accession>
<dbReference type="EMBL" id="BC111241">
    <property type="protein sequence ID" value="AAI11242.1"/>
    <property type="molecule type" value="mRNA"/>
</dbReference>
<dbReference type="RefSeq" id="NP_001070594.1">
    <property type="nucleotide sequence ID" value="NM_001077126.1"/>
</dbReference>
<dbReference type="SMR" id="Q2NL11"/>
<dbReference type="FunCoup" id="Q2NL11">
    <property type="interactions" value="6"/>
</dbReference>
<dbReference type="PaxDb" id="9913-ENSBTAP00000005411"/>
<dbReference type="Ensembl" id="ENSBTAT00000005411.6">
    <property type="protein sequence ID" value="ENSBTAP00000005411.5"/>
    <property type="gene ID" value="ENSBTAG00000004134.7"/>
</dbReference>
<dbReference type="GeneID" id="768069"/>
<dbReference type="KEGG" id="bta:768069"/>
<dbReference type="CTD" id="768069"/>
<dbReference type="VEuPathDB" id="HostDB:ENSBTAG00000004134"/>
<dbReference type="VGNC" id="VGNC:52737">
    <property type="gene designation" value="C8H8orf74"/>
</dbReference>
<dbReference type="eggNOG" id="ENOG502RYV3">
    <property type="taxonomic scope" value="Eukaryota"/>
</dbReference>
<dbReference type="GeneTree" id="ENSGT00940000154323"/>
<dbReference type="HOGENOM" id="CLU_081156_0_0_1"/>
<dbReference type="InParanoid" id="Q2NL11"/>
<dbReference type="OMA" id="YQFVLCR"/>
<dbReference type="OrthoDB" id="6103133at2759"/>
<dbReference type="TreeFam" id="TF343725"/>
<dbReference type="Proteomes" id="UP000009136">
    <property type="component" value="Chromosome 8"/>
</dbReference>
<dbReference type="Bgee" id="ENSBTAG00000004134">
    <property type="expression patterns" value="Expressed in spermatid and 12 other cell types or tissues"/>
</dbReference>
<dbReference type="InterPro" id="IPR032727">
    <property type="entry name" value="CLAMP"/>
</dbReference>
<dbReference type="PANTHER" id="PTHR28457">
    <property type="entry name" value="COILED-COIL DOMAIN-CONTAINING PROTEIN 189"/>
    <property type="match status" value="1"/>
</dbReference>
<dbReference type="PANTHER" id="PTHR28457:SF2">
    <property type="entry name" value="SIMILAR TO 4930578I06RIK PROTEIN"/>
    <property type="match status" value="1"/>
</dbReference>
<dbReference type="Pfam" id="PF14769">
    <property type="entry name" value="CLAMP"/>
    <property type="match status" value="1"/>
</dbReference>